<protein>
    <recommendedName>
        <fullName evidence="1">Exodeoxyribonuclease 7 small subunit</fullName>
        <ecNumber evidence="1">3.1.11.6</ecNumber>
    </recommendedName>
    <alternativeName>
        <fullName evidence="1">Exodeoxyribonuclease VII small subunit</fullName>
        <shortName evidence="1">Exonuclease VII small subunit</shortName>
    </alternativeName>
</protein>
<accession>B1HRX6</accession>
<name>EX7S_LYSSC</name>
<organism>
    <name type="scientific">Lysinibacillus sphaericus (strain C3-41)</name>
    <dbReference type="NCBI Taxonomy" id="444177"/>
    <lineage>
        <taxon>Bacteria</taxon>
        <taxon>Bacillati</taxon>
        <taxon>Bacillota</taxon>
        <taxon>Bacilli</taxon>
        <taxon>Bacillales</taxon>
        <taxon>Bacillaceae</taxon>
        <taxon>Lysinibacillus</taxon>
    </lineage>
</organism>
<keyword id="KW-0963">Cytoplasm</keyword>
<keyword id="KW-0269">Exonuclease</keyword>
<keyword id="KW-0378">Hydrolase</keyword>
<keyword id="KW-0540">Nuclease</keyword>
<reference key="1">
    <citation type="journal article" date="2008" name="J. Bacteriol.">
        <title>Complete genome sequence of the mosquitocidal bacterium Bacillus sphaericus C3-41 and comparison with those of closely related Bacillus species.</title>
        <authorList>
            <person name="Hu X."/>
            <person name="Fan W."/>
            <person name="Han B."/>
            <person name="Liu H."/>
            <person name="Zheng D."/>
            <person name="Li Q."/>
            <person name="Dong W."/>
            <person name="Yan J."/>
            <person name="Gao M."/>
            <person name="Berry C."/>
            <person name="Yuan Z."/>
        </authorList>
    </citation>
    <scope>NUCLEOTIDE SEQUENCE [LARGE SCALE GENOMIC DNA]</scope>
    <source>
        <strain>C3-41</strain>
    </source>
</reference>
<comment type="function">
    <text evidence="1">Bidirectionally degrades single-stranded DNA into large acid-insoluble oligonucleotides, which are then degraded further into small acid-soluble oligonucleotides.</text>
</comment>
<comment type="catalytic activity">
    <reaction evidence="1">
        <text>Exonucleolytic cleavage in either 5'- to 3'- or 3'- to 5'-direction to yield nucleoside 5'-phosphates.</text>
        <dbReference type="EC" id="3.1.11.6"/>
    </reaction>
</comment>
<comment type="subunit">
    <text evidence="1">Heterooligomer composed of large and small subunits.</text>
</comment>
<comment type="subcellular location">
    <subcellularLocation>
        <location evidence="1">Cytoplasm</location>
    </subcellularLocation>
</comment>
<comment type="similarity">
    <text evidence="1">Belongs to the XseB family.</text>
</comment>
<feature type="chain" id="PRO_1000119938" description="Exodeoxyribonuclease 7 small subunit">
    <location>
        <begin position="1"/>
        <end position="77"/>
    </location>
</feature>
<proteinExistence type="inferred from homology"/>
<dbReference type="EC" id="3.1.11.6" evidence="1"/>
<dbReference type="EMBL" id="CP000817">
    <property type="protein sequence ID" value="ACA40999.1"/>
    <property type="molecule type" value="Genomic_DNA"/>
</dbReference>
<dbReference type="RefSeq" id="WP_008179899.1">
    <property type="nucleotide sequence ID" value="NC_010382.1"/>
</dbReference>
<dbReference type="SMR" id="B1HRX6"/>
<dbReference type="EnsemblBacteria" id="ACA40999">
    <property type="protein sequence ID" value="ACA40999"/>
    <property type="gene ID" value="Bsph_3511"/>
</dbReference>
<dbReference type="KEGG" id="lsp:Bsph_3511"/>
<dbReference type="HOGENOM" id="CLU_145918_3_1_9"/>
<dbReference type="Proteomes" id="UP000002164">
    <property type="component" value="Chromosome"/>
</dbReference>
<dbReference type="GO" id="GO:0005829">
    <property type="term" value="C:cytosol"/>
    <property type="evidence" value="ECO:0007669"/>
    <property type="project" value="TreeGrafter"/>
</dbReference>
<dbReference type="GO" id="GO:0009318">
    <property type="term" value="C:exodeoxyribonuclease VII complex"/>
    <property type="evidence" value="ECO:0007669"/>
    <property type="project" value="InterPro"/>
</dbReference>
<dbReference type="GO" id="GO:0008855">
    <property type="term" value="F:exodeoxyribonuclease VII activity"/>
    <property type="evidence" value="ECO:0007669"/>
    <property type="project" value="UniProtKB-UniRule"/>
</dbReference>
<dbReference type="GO" id="GO:0006308">
    <property type="term" value="P:DNA catabolic process"/>
    <property type="evidence" value="ECO:0007669"/>
    <property type="project" value="UniProtKB-UniRule"/>
</dbReference>
<dbReference type="Gene3D" id="1.10.287.1040">
    <property type="entry name" value="Exonuclease VII, small subunit"/>
    <property type="match status" value="1"/>
</dbReference>
<dbReference type="HAMAP" id="MF_00337">
    <property type="entry name" value="Exonuc_7_S"/>
    <property type="match status" value="1"/>
</dbReference>
<dbReference type="InterPro" id="IPR003761">
    <property type="entry name" value="Exonuc_VII_S"/>
</dbReference>
<dbReference type="InterPro" id="IPR037004">
    <property type="entry name" value="Exonuc_VII_ssu_sf"/>
</dbReference>
<dbReference type="NCBIfam" id="NF002138">
    <property type="entry name" value="PRK00977.1-2"/>
    <property type="match status" value="1"/>
</dbReference>
<dbReference type="NCBIfam" id="TIGR01280">
    <property type="entry name" value="xseB"/>
    <property type="match status" value="1"/>
</dbReference>
<dbReference type="PANTHER" id="PTHR34137">
    <property type="entry name" value="EXODEOXYRIBONUCLEASE 7 SMALL SUBUNIT"/>
    <property type="match status" value="1"/>
</dbReference>
<dbReference type="PANTHER" id="PTHR34137:SF1">
    <property type="entry name" value="EXODEOXYRIBONUCLEASE 7 SMALL SUBUNIT"/>
    <property type="match status" value="1"/>
</dbReference>
<dbReference type="Pfam" id="PF02609">
    <property type="entry name" value="Exonuc_VII_S"/>
    <property type="match status" value="1"/>
</dbReference>
<dbReference type="PIRSF" id="PIRSF006488">
    <property type="entry name" value="Exonuc_VII_S"/>
    <property type="match status" value="1"/>
</dbReference>
<dbReference type="SUPFAM" id="SSF116842">
    <property type="entry name" value="XseB-like"/>
    <property type="match status" value="1"/>
</dbReference>
<sequence length="77" mass="8697">MTEKQQTFAEAMTALEEIVRQLEQGDVPLENAIDLYKQGMELSKFCHSKLQHAEEQLVSIVQETGETTAFDPLKGEN</sequence>
<evidence type="ECO:0000255" key="1">
    <source>
        <dbReference type="HAMAP-Rule" id="MF_00337"/>
    </source>
</evidence>
<gene>
    <name evidence="1" type="primary">xseB</name>
    <name type="ordered locus">Bsph_3511</name>
</gene>